<organism>
    <name type="scientific">Cryptococcus neoformans var. grubii serotype A (strain H99 / ATCC 208821 / CBS 10515 / FGSC 9487)</name>
    <name type="common">Filobasidiella neoformans var. grubii</name>
    <dbReference type="NCBI Taxonomy" id="235443"/>
    <lineage>
        <taxon>Eukaryota</taxon>
        <taxon>Fungi</taxon>
        <taxon>Dikarya</taxon>
        <taxon>Basidiomycota</taxon>
        <taxon>Agaricomycotina</taxon>
        <taxon>Tremellomycetes</taxon>
        <taxon>Tremellales</taxon>
        <taxon>Cryptococcaceae</taxon>
        <taxon>Cryptococcus</taxon>
        <taxon>Cryptococcus neoformans species complex</taxon>
    </lineage>
</organism>
<proteinExistence type="evidence at protein level"/>
<protein>
    <recommendedName>
        <fullName evidence="9">CUF1-dependent copper transporter 1</fullName>
        <shortName evidence="9">Copper transporter 1</shortName>
    </recommendedName>
</protein>
<name>CTR1_CRYNH</name>
<reference key="1">
    <citation type="journal article" date="2014" name="PLoS Genet.">
        <title>Analysis of the genome and transcriptome of Cryptococcus neoformans var. grubii reveals complex RNA expression and microevolution leading to virulence attenuation.</title>
        <authorList>
            <person name="Janbon G."/>
            <person name="Ormerod K.L."/>
            <person name="Paulet D."/>
            <person name="Byrnes E.J. III"/>
            <person name="Yadav V."/>
            <person name="Chatterjee G."/>
            <person name="Mullapudi N."/>
            <person name="Hon C.-C."/>
            <person name="Billmyre R.B."/>
            <person name="Brunel F."/>
            <person name="Bahn Y.-S."/>
            <person name="Chen W."/>
            <person name="Chen Y."/>
            <person name="Chow E.W.L."/>
            <person name="Coppee J.-Y."/>
            <person name="Floyd-Averette A."/>
            <person name="Gaillardin C."/>
            <person name="Gerik K.J."/>
            <person name="Goldberg J."/>
            <person name="Gonzalez-Hilarion S."/>
            <person name="Gujja S."/>
            <person name="Hamlin J.L."/>
            <person name="Hsueh Y.-P."/>
            <person name="Ianiri G."/>
            <person name="Jones S."/>
            <person name="Kodira C.D."/>
            <person name="Kozubowski L."/>
            <person name="Lam W."/>
            <person name="Marra M."/>
            <person name="Mesner L.D."/>
            <person name="Mieczkowski P.A."/>
            <person name="Moyrand F."/>
            <person name="Nielsen K."/>
            <person name="Proux C."/>
            <person name="Rossignol T."/>
            <person name="Schein J.E."/>
            <person name="Sun S."/>
            <person name="Wollschlaeger C."/>
            <person name="Wood I.A."/>
            <person name="Zeng Q."/>
            <person name="Neuveglise C."/>
            <person name="Newlon C.S."/>
            <person name="Perfect J.R."/>
            <person name="Lodge J.K."/>
            <person name="Idnurm A."/>
            <person name="Stajich J.E."/>
            <person name="Kronstad J.W."/>
            <person name="Sanyal K."/>
            <person name="Heitman J."/>
            <person name="Fraser J.A."/>
            <person name="Cuomo C.A."/>
            <person name="Dietrich F.S."/>
        </authorList>
    </citation>
    <scope>NUCLEOTIDE SEQUENCE [LARGE SCALE GENOMIC DNA]</scope>
    <source>
        <strain>H99 / ATCC 208821 / CBS 10515 / FGSC 9487</strain>
    </source>
</reference>
<reference key="2">
    <citation type="journal article" date="2011" name="Mol. Microbiol.">
        <title>The copper regulon of the human fungal pathogen Cryptococcus neoformans H99.</title>
        <authorList>
            <person name="Ding C."/>
            <person name="Yin J."/>
            <person name="Tovar E.M."/>
            <person name="Fitzpatrick D.A."/>
            <person name="Higgins D.G."/>
            <person name="Thiele D.J."/>
        </authorList>
    </citation>
    <scope>FUNCTION</scope>
    <scope>INDUCTION</scope>
    <scope>DISRUPTION PHENOTYPE</scope>
</reference>
<reference key="3">
    <citation type="journal article" date="2013" name="Cell Host Microbe">
        <title>Cryptococcus neoformans copper detoxification machinery is critical for fungal virulence.</title>
        <authorList>
            <person name="Ding C."/>
            <person name="Festa R.A."/>
            <person name="Chen Y.L."/>
            <person name="Espart A."/>
            <person name="Palacios O."/>
            <person name="Espin J."/>
            <person name="Capdevila M."/>
            <person name="Atrian S."/>
            <person name="Heitman J."/>
            <person name="Thiele D.J."/>
        </authorList>
    </citation>
    <scope>FUNCTION</scope>
</reference>
<reference key="4">
    <citation type="journal article" date="2014" name="Nat. Commun.">
        <title>Reciprocal functions of Cryptococcus neoformans copper homeostasis machinery during pulmonary infection and meningoencephalitis.</title>
        <authorList>
            <person name="Sun T.S."/>
            <person name="Ju X."/>
            <person name="Gao H.L."/>
            <person name="Wang T."/>
            <person name="Thiele D.J."/>
            <person name="Li J.Y."/>
            <person name="Wang Z.Y."/>
            <person name="Ding C."/>
        </authorList>
    </citation>
    <scope>FUNCTION</scope>
    <scope>DISRUPTION PHENOTYPE</scope>
</reference>
<reference key="5">
    <citation type="journal article" date="2018" name="Mol. Microbiol.">
        <title>Genome-wide analysis of the regulation of Cu metabolism in Cryptococcus neoformans.</title>
        <authorList>
            <person name="Garcia-Santamarina S."/>
            <person name="Festa R.A."/>
            <person name="Smith A.D."/>
            <person name="Yu C.H."/>
            <person name="Probst C."/>
            <person name="Ding C."/>
            <person name="Homer C.M."/>
            <person name="Yin J."/>
            <person name="Noonan J.P."/>
            <person name="Madhani H."/>
            <person name="Perfect J.R."/>
            <person name="Thiele D.J."/>
        </authorList>
    </citation>
    <scope>INDUCTION</scope>
</reference>
<reference key="6">
    <citation type="journal article" date="2020" name="Nat. Chem. Biol.">
        <title>A lytic polysaccharide monooxygenase-like protein functions in fungal copper import and meningitis.</title>
        <authorList>
            <person name="Garcia-Santamarina S."/>
            <person name="Probst C."/>
            <person name="Festa R.A."/>
            <person name="Ding C."/>
            <person name="Smith A.D."/>
            <person name="Conklin S.E."/>
            <person name="Brander S."/>
            <person name="Kinch L.N."/>
            <person name="Grishin N.V."/>
            <person name="Franz K.J."/>
            <person name="Riggs-Gelasco P."/>
            <person name="Lo Leggio L."/>
            <person name="Johansen K.S."/>
            <person name="Thiele D.J."/>
        </authorList>
    </citation>
    <scope>FUNCTION</scope>
    <scope>INTERACTION WITH BIM1</scope>
</reference>
<feature type="chain" id="PRO_0000449517" description="CUF1-dependent copper transporter 1">
    <location>
        <begin position="1"/>
        <end position="288"/>
    </location>
</feature>
<feature type="transmembrane region" description="Helical" evidence="1">
    <location>
        <begin position="42"/>
        <end position="62"/>
    </location>
</feature>
<feature type="transmembrane region" description="Helical" evidence="1">
    <location>
        <begin position="251"/>
        <end position="271"/>
    </location>
</feature>
<feature type="region of interest" description="Disordered" evidence="3">
    <location>
        <begin position="106"/>
        <end position="125"/>
    </location>
</feature>
<feature type="region of interest" description="Disordered" evidence="3">
    <location>
        <begin position="154"/>
        <end position="180"/>
    </location>
</feature>
<feature type="compositionally biased region" description="Polar residues" evidence="3">
    <location>
        <begin position="158"/>
        <end position="167"/>
    </location>
</feature>
<feature type="compositionally biased region" description="Low complexity" evidence="3">
    <location>
        <begin position="168"/>
        <end position="177"/>
    </location>
</feature>
<feature type="glycosylation site" description="N-linked (GlcNAc...) asparagine" evidence="2">
    <location>
        <position position="18"/>
    </location>
</feature>
<accession>J9VX37</accession>
<dbReference type="EMBL" id="CP003826">
    <property type="protein sequence ID" value="AFR96280.2"/>
    <property type="molecule type" value="Genomic_DNA"/>
</dbReference>
<dbReference type="RefSeq" id="XP_012050436.1">
    <property type="nucleotide sequence ID" value="XM_012195046.1"/>
</dbReference>
<dbReference type="GlyCosmos" id="J9VX37">
    <property type="glycosylation" value="1 site, No reported glycans"/>
</dbReference>
<dbReference type="GeneID" id="23890524"/>
<dbReference type="KEGG" id="cng:CNAG_07701"/>
<dbReference type="VEuPathDB" id="FungiDB:CNAG_07701"/>
<dbReference type="HOGENOM" id="CLU_966496_0_0_1"/>
<dbReference type="OrthoDB" id="4981at5206"/>
<dbReference type="Proteomes" id="UP000010091">
    <property type="component" value="Chromosome 7"/>
</dbReference>
<dbReference type="GO" id="GO:0005886">
    <property type="term" value="C:plasma membrane"/>
    <property type="evidence" value="ECO:0007669"/>
    <property type="project" value="UniProtKB-SubCell"/>
</dbReference>
<dbReference type="GO" id="GO:0005375">
    <property type="term" value="F:copper ion transmembrane transporter activity"/>
    <property type="evidence" value="ECO:0007669"/>
    <property type="project" value="InterPro"/>
</dbReference>
<dbReference type="InterPro" id="IPR007274">
    <property type="entry name" value="Cop_transporter"/>
</dbReference>
<dbReference type="PANTHER" id="PTHR12483:SF27">
    <property type="entry name" value="COPPER TRANSPORT PROTEIN CTR1"/>
    <property type="match status" value="1"/>
</dbReference>
<dbReference type="PANTHER" id="PTHR12483">
    <property type="entry name" value="SOLUTE CARRIER FAMILY 31 COPPER TRANSPORTERS"/>
    <property type="match status" value="1"/>
</dbReference>
<dbReference type="Pfam" id="PF04145">
    <property type="entry name" value="Ctr"/>
    <property type="match status" value="1"/>
</dbReference>
<comment type="function">
    <text evidence="4 5 6 8 12">High affinity copper transporter involved in Cu(+) import into the cell upon copper-limitating conditions (PubMed:21819456, PubMed:23498952, PubMed:31932719). Functions with BIM1 and probably also FRE4 and FRE7, where FRE4 and FRE7 metalloreductases liberate the Cu(2+) bound to the BIM1 copper-binding site for subsequent import of Cu(+) into the cell by CTR1, via the reduction of BIM1-bound Cu(2+) to Cu(+) to reduce binding affinity for BIM1 but increase affinity for CTR1 (Probable). The BIM1-CTR1 pathway for copper uptake plays a key role in colonization in the brain where copper amounts are low and thus in cryptococcal meningitis (PubMed:25417972, PubMed:31932719).</text>
</comment>
<comment type="subunit">
    <text evidence="8">Interacts with the copper acquisition factor BIM1.</text>
</comment>
<comment type="subcellular location">
    <subcellularLocation>
        <location evidence="11">Cell membrane</location>
        <topology evidence="1">Multi-pass membrane protein</topology>
    </subcellularLocation>
</comment>
<comment type="induction">
    <text evidence="4 7">Expression is induced by copper deficiency and regulated by the CUF1 copper-dependent transcription factor (PubMed:21819456, PubMed:29608794). The CTR1 promoter harbors the Cu-responsive element (CuRE), which is critical for CUF1 binding and activation under copper-limiting conditions (PubMed:29608794).</text>
</comment>
<comment type="disruption phenotype">
    <text evidence="4 6">Leads to a severe growth defect in copper deficiency conditions, but does not significantly affect melanin production, nor fungal virulence (PubMed:21819456, PubMed:25417972). However, when both CTR1 and CTR4 are disrupted, the colonization in the brain and subsequent virulence are significantly reduced (PubMed:25417972).</text>
</comment>
<comment type="similarity">
    <text evidence="10">Belongs to the copper transporter (Ctr) (TC 1.A.56) family. SLC31A subfamily.</text>
</comment>
<keyword id="KW-1003">Cell membrane</keyword>
<keyword id="KW-0325">Glycoprotein</keyword>
<keyword id="KW-0472">Membrane</keyword>
<keyword id="KW-0812">Transmembrane</keyword>
<keyword id="KW-1133">Transmembrane helix</keyword>
<gene>
    <name evidence="9" type="primary">CTR1</name>
    <name type="ORF">CNAG_07701</name>
</gene>
<evidence type="ECO:0000255" key="1"/>
<evidence type="ECO:0000255" key="2">
    <source>
        <dbReference type="PROSITE-ProRule" id="PRU00498"/>
    </source>
</evidence>
<evidence type="ECO:0000256" key="3">
    <source>
        <dbReference type="SAM" id="MobiDB-lite"/>
    </source>
</evidence>
<evidence type="ECO:0000269" key="4">
    <source>
    </source>
</evidence>
<evidence type="ECO:0000269" key="5">
    <source>
    </source>
</evidence>
<evidence type="ECO:0000269" key="6">
    <source>
    </source>
</evidence>
<evidence type="ECO:0000269" key="7">
    <source>
    </source>
</evidence>
<evidence type="ECO:0000269" key="8">
    <source>
    </source>
</evidence>
<evidence type="ECO:0000303" key="9">
    <source>
    </source>
</evidence>
<evidence type="ECO:0000305" key="10"/>
<evidence type="ECO:0000305" key="11">
    <source>
    </source>
</evidence>
<evidence type="ECO:0000305" key="12">
    <source>
    </source>
</evidence>
<sequence>MDMSGMDGMDHMSSTSSNMSMSMKMYFHGTIGGDLLWFASWMPSSAGATVGVCIGLFILAIFERYLVAFRRACDAAWRRGQVGYVRPCSNGPLVFSSGKSTSLPPPVLFNRRSSTKKEKDVYNPLTPSDYALESNQDGSVEPVTPYTPSIHALRESQEGSSAPSYAHSQQGQAQAQGSGVGCDPCAEGRVAEIERCKEKAVERGLVHSHLPKAVRRSLDPGREGRWSRPFRLAVDVPRGLLQALQTLIHYLLMLVVMTFNIWWMISVVIGCGVGEMLFGRFGSSHVGH</sequence>